<accession>Q9PSM6</accession>
<accession>Q9PRQ8</accession>
<comment type="function">
    <text evidence="2">Binds to platelet GPIb (subunit alpha) (GP1BA) and functions as a receptor blocker for vWF binding to GPIb. The platelet GPIb-binding site resides on the GPIB-BP subunit beta and not on the alpha subunit. At a final concentration of 104 nM totally abolishes vWF-dependent shear-induced platelet aggregation (SIPA) at a high shear stress, but had no effect on SIPA at a low shear stress.</text>
</comment>
<comment type="subunit">
    <text evidence="2">Heterodimer of subunits alpha and beta; disulfide-linked.</text>
</comment>
<comment type="subcellular location">
    <subcellularLocation>
        <location>Secreted</location>
    </subcellularLocation>
</comment>
<comment type="tissue specificity">
    <text>Expressed by the venom gland.</text>
</comment>
<comment type="miscellaneous">
    <text evidence="4">Negative results: does not induce platelet aggregation or serotonin release from platelets.</text>
</comment>
<comment type="similarity">
    <text evidence="3">Belongs to the snaclec family.</text>
</comment>
<evidence type="ECO:0000255" key="1">
    <source>
        <dbReference type="PROSITE-ProRule" id="PRU00040"/>
    </source>
</evidence>
<evidence type="ECO:0000269" key="2">
    <source>
    </source>
</evidence>
<evidence type="ECO:0000305" key="3"/>
<evidence type="ECO:0000305" key="4">
    <source>
    </source>
</evidence>
<sequence length="142" mass="16720">DTPFECPSDWSTHRQYCYKFFQQKESWDDRSEYDAERFCSEQAKGGHLVSIESDEEADFVAQLVAPNIGKSKYYVWIGLRIENKKQQCSSKWSDYSSVSYENLVRGNVKKCFALEKKQGFRKWVNIDCVEGNPFVCKFIRPR</sequence>
<name>SL1A_BOTJA</name>
<proteinExistence type="evidence at protein level"/>
<feature type="chain" id="PRO_0000355254" description="Snaclec GPIB-binding protein subunit alpha">
    <location>
        <begin position="1"/>
        <end position="142"/>
    </location>
</feature>
<feature type="domain" description="C-type lectin" evidence="1">
    <location>
        <begin position="13"/>
        <end position="137"/>
    </location>
</feature>
<feature type="disulfide bond" evidence="1">
    <location>
        <begin position="6"/>
        <end position="17"/>
    </location>
</feature>
<feature type="disulfide bond" evidence="1">
    <location>
        <begin position="39"/>
        <end position="136"/>
    </location>
</feature>
<feature type="disulfide bond" description="Interchain (with C-75 in subunit alpha)" evidence="1">
    <location>
        <position position="88"/>
    </location>
</feature>
<feature type="disulfide bond" evidence="1">
    <location>
        <begin position="111"/>
        <end position="128"/>
    </location>
</feature>
<keyword id="KW-0903">Direct protein sequencing</keyword>
<keyword id="KW-1015">Disulfide bond</keyword>
<keyword id="KW-1199">Hemostasis impairing toxin</keyword>
<keyword id="KW-1201">Platelet aggregation inhibiting toxin</keyword>
<keyword id="KW-0964">Secreted</keyword>
<keyword id="KW-0800">Toxin</keyword>
<organism>
    <name type="scientific">Bothrops jararaca</name>
    <name type="common">Jararaca</name>
    <name type="synonym">Bothrops jajaraca</name>
    <dbReference type="NCBI Taxonomy" id="8724"/>
    <lineage>
        <taxon>Eukaryota</taxon>
        <taxon>Metazoa</taxon>
        <taxon>Chordata</taxon>
        <taxon>Craniata</taxon>
        <taxon>Vertebrata</taxon>
        <taxon>Euteleostomi</taxon>
        <taxon>Lepidosauria</taxon>
        <taxon>Squamata</taxon>
        <taxon>Bifurcata</taxon>
        <taxon>Unidentata</taxon>
        <taxon>Episquamata</taxon>
        <taxon>Toxicofera</taxon>
        <taxon>Serpentes</taxon>
        <taxon>Colubroidea</taxon>
        <taxon>Viperidae</taxon>
        <taxon>Crotalinae</taxon>
        <taxon>Bothrops</taxon>
    </lineage>
</organism>
<reference key="1">
    <citation type="journal article" date="1996" name="J. Biol. Chem.">
        <title>Complete amino acid sequence and identification of the platelet glycoprotein Ib-binding site of jararaca GPIb-BP, a snake venom protein isolated from Bothrops jararaca.</title>
        <authorList>
            <person name="Kawasaki T."/>
            <person name="Fujimura Y."/>
            <person name="Usami Y."/>
            <person name="Suzuki M."/>
            <person name="Miura S."/>
            <person name="Sakurai Y."/>
            <person name="Makita K."/>
            <person name="Taniuchi Y."/>
            <person name="Hirano K."/>
            <person name="Titani K."/>
        </authorList>
    </citation>
    <scope>PROTEIN SEQUENCE</scope>
    <scope>GPIB-BINDING SITE</scope>
    <source>
        <tissue>Venom</tissue>
    </source>
</reference>
<reference key="2">
    <citation type="journal article" date="1995" name="Thromb. Haemost.">
        <title>Isolation and characterization of jararaca GPIb-BP, a snake venom antagonist specific to platelet glycoprotein Ib.</title>
        <authorList>
            <person name="Fujimura Y."/>
            <person name="Ikeda Y."/>
            <person name="Miura S."/>
            <person name="Yoshida E."/>
            <person name="Shima H."/>
            <person name="Nishida S."/>
            <person name="Suzuki M."/>
            <person name="Titani K."/>
            <person name="Taniuchi Y."/>
            <person name="Kawasaki T."/>
        </authorList>
    </citation>
    <scope>PROTEIN SEQUENCE OF 1-42</scope>
    <scope>FUNCTION</scope>
    <scope>SUBUNIT</scope>
    <source>
        <tissue>Venom</tissue>
    </source>
</reference>
<dbReference type="SMR" id="Q9PSM6"/>
<dbReference type="GO" id="GO:0005576">
    <property type="term" value="C:extracellular region"/>
    <property type="evidence" value="ECO:0007669"/>
    <property type="project" value="UniProtKB-SubCell"/>
</dbReference>
<dbReference type="GO" id="GO:0090729">
    <property type="term" value="F:toxin activity"/>
    <property type="evidence" value="ECO:0007669"/>
    <property type="project" value="UniProtKB-KW"/>
</dbReference>
<dbReference type="FunFam" id="3.10.100.10:FF:000087">
    <property type="entry name" value="Snaclec rhodocetin subunit delta"/>
    <property type="match status" value="1"/>
</dbReference>
<dbReference type="Gene3D" id="3.10.100.10">
    <property type="entry name" value="Mannose-Binding Protein A, subunit A"/>
    <property type="match status" value="1"/>
</dbReference>
<dbReference type="InterPro" id="IPR001304">
    <property type="entry name" value="C-type_lectin-like"/>
</dbReference>
<dbReference type="InterPro" id="IPR016186">
    <property type="entry name" value="C-type_lectin-like/link_sf"/>
</dbReference>
<dbReference type="InterPro" id="IPR018378">
    <property type="entry name" value="C-type_lectin_CS"/>
</dbReference>
<dbReference type="InterPro" id="IPR016187">
    <property type="entry name" value="CTDL_fold"/>
</dbReference>
<dbReference type="InterPro" id="IPR050976">
    <property type="entry name" value="Snaclec"/>
</dbReference>
<dbReference type="PANTHER" id="PTHR22991">
    <property type="entry name" value="PROTEIN CBG13490"/>
    <property type="match status" value="1"/>
</dbReference>
<dbReference type="PANTHER" id="PTHR22991:SF40">
    <property type="entry name" value="PROTEIN CBG13490"/>
    <property type="match status" value="1"/>
</dbReference>
<dbReference type="Pfam" id="PF00059">
    <property type="entry name" value="Lectin_C"/>
    <property type="match status" value="1"/>
</dbReference>
<dbReference type="SMART" id="SM00034">
    <property type="entry name" value="CLECT"/>
    <property type="match status" value="1"/>
</dbReference>
<dbReference type="SUPFAM" id="SSF56436">
    <property type="entry name" value="C-type lectin-like"/>
    <property type="match status" value="1"/>
</dbReference>
<dbReference type="PROSITE" id="PS00615">
    <property type="entry name" value="C_TYPE_LECTIN_1"/>
    <property type="match status" value="1"/>
</dbReference>
<dbReference type="PROSITE" id="PS50041">
    <property type="entry name" value="C_TYPE_LECTIN_2"/>
    <property type="match status" value="1"/>
</dbReference>
<protein>
    <recommendedName>
        <fullName>Snaclec GPIB-binding protein subunit alpha</fullName>
        <shortName>GPIb-BP subunit alpha</shortName>
    </recommendedName>
</protein>